<accession>Q33C22</accession>
<comment type="function">
    <text evidence="1">Seems to be required for the assembly of the photosystem I complex.</text>
</comment>
<comment type="subcellular location">
    <subcellularLocation>
        <location evidence="1">Plastid</location>
        <location evidence="1">Chloroplast thylakoid membrane</location>
        <topology evidence="1">Multi-pass membrane protein</topology>
    </subcellularLocation>
</comment>
<comment type="similarity">
    <text evidence="1">Belongs to the Ycf4 family.</text>
</comment>
<name>YCF4_NICTO</name>
<gene>
    <name evidence="1" type="primary">ycf4</name>
</gene>
<proteinExistence type="inferred from homology"/>
<geneLocation type="chloroplast"/>
<dbReference type="EMBL" id="AB240139">
    <property type="protein sequence ID" value="BAE48013.1"/>
    <property type="molecule type" value="Genomic_DNA"/>
</dbReference>
<dbReference type="RefSeq" id="YP_398875.1">
    <property type="nucleotide sequence ID" value="NC_007602.1"/>
</dbReference>
<dbReference type="GeneID" id="3776397"/>
<dbReference type="KEGG" id="nto:3776397"/>
<dbReference type="OrthoDB" id="1287926at2759"/>
<dbReference type="GO" id="GO:0009535">
    <property type="term" value="C:chloroplast thylakoid membrane"/>
    <property type="evidence" value="ECO:0007669"/>
    <property type="project" value="UniProtKB-SubCell"/>
</dbReference>
<dbReference type="GO" id="GO:0009522">
    <property type="term" value="C:photosystem I"/>
    <property type="evidence" value="ECO:0007669"/>
    <property type="project" value="InterPro"/>
</dbReference>
<dbReference type="GO" id="GO:0015979">
    <property type="term" value="P:photosynthesis"/>
    <property type="evidence" value="ECO:0007669"/>
    <property type="project" value="UniProtKB-UniRule"/>
</dbReference>
<dbReference type="HAMAP" id="MF_00437">
    <property type="entry name" value="Ycf4"/>
    <property type="match status" value="1"/>
</dbReference>
<dbReference type="InterPro" id="IPR003359">
    <property type="entry name" value="PSI_Ycf4_assembly"/>
</dbReference>
<dbReference type="PANTHER" id="PTHR33288">
    <property type="match status" value="1"/>
</dbReference>
<dbReference type="PANTHER" id="PTHR33288:SF4">
    <property type="entry name" value="PHOTOSYSTEM I ASSEMBLY PROTEIN YCF4"/>
    <property type="match status" value="1"/>
</dbReference>
<dbReference type="Pfam" id="PF02392">
    <property type="entry name" value="Ycf4"/>
    <property type="match status" value="1"/>
</dbReference>
<feature type="chain" id="PRO_0000275663" description="Photosystem I assembly protein Ycf4">
    <location>
        <begin position="1"/>
        <end position="184"/>
    </location>
</feature>
<feature type="transmembrane region" description="Helical" evidence="1">
    <location>
        <begin position="19"/>
        <end position="39"/>
    </location>
</feature>
<feature type="transmembrane region" description="Helical" evidence="1">
    <location>
        <begin position="57"/>
        <end position="77"/>
    </location>
</feature>
<keyword id="KW-0150">Chloroplast</keyword>
<keyword id="KW-0472">Membrane</keyword>
<keyword id="KW-0602">Photosynthesis</keyword>
<keyword id="KW-0934">Plastid</keyword>
<keyword id="KW-0793">Thylakoid</keyword>
<keyword id="KW-0812">Transmembrane</keyword>
<keyword id="KW-1133">Transmembrane helix</keyword>
<evidence type="ECO:0000255" key="1">
    <source>
        <dbReference type="HAMAP-Rule" id="MF_00437"/>
    </source>
</evidence>
<organism>
    <name type="scientific">Nicotiana tomentosiformis</name>
    <name type="common">Tobacco</name>
    <dbReference type="NCBI Taxonomy" id="4098"/>
    <lineage>
        <taxon>Eukaryota</taxon>
        <taxon>Viridiplantae</taxon>
        <taxon>Streptophyta</taxon>
        <taxon>Embryophyta</taxon>
        <taxon>Tracheophyta</taxon>
        <taxon>Spermatophyta</taxon>
        <taxon>Magnoliopsida</taxon>
        <taxon>eudicotyledons</taxon>
        <taxon>Gunneridae</taxon>
        <taxon>Pentapetalae</taxon>
        <taxon>asterids</taxon>
        <taxon>lamiids</taxon>
        <taxon>Solanales</taxon>
        <taxon>Solanaceae</taxon>
        <taxon>Nicotianoideae</taxon>
        <taxon>Nicotianeae</taxon>
        <taxon>Nicotiana</taxon>
    </lineage>
</organism>
<protein>
    <recommendedName>
        <fullName evidence="1">Photosystem I assembly protein Ycf4</fullName>
    </recommendedName>
</protein>
<sequence length="184" mass="21401">MTWRSEHIWIELITGSRKISNFCWAFILFLGSLGFLLVGTSSYLGRNLISFFPPQQIVFFPQGIVMSFYGIAGLFISSYLWCTISWNVGSGYDRFDIKEGIVCIFRWGFPGKNRRIFLRFLIKDIQSVRIEVKEGIYARRVLYMDIRGQGSIPLTRTDENLTPREIEQKAAELAYFLRVPIEVF</sequence>
<reference key="1">
    <citation type="journal article" date="2006" name="Mol. Genet. Genomics">
        <title>The chloroplast genome of Nicotiana sylvestris and Nicotiana tomentosiformis: complete sequencing confirms that the Nicotiana sylvestris progenitor is the maternal genome donor of Nicotiana tabacum.</title>
        <authorList>
            <person name="Yukawa M."/>
            <person name="Tsudzuki T."/>
            <person name="Sugiura M."/>
        </authorList>
    </citation>
    <scope>NUCLEOTIDE SEQUENCE [LARGE SCALE GENOMIC DNA]</scope>
</reference>